<dbReference type="EC" id="2.7.7.6" evidence="1"/>
<dbReference type="EMBL" id="BA000002">
    <property type="protein sequence ID" value="BAA80856.2"/>
    <property type="molecule type" value="Genomic_DNA"/>
</dbReference>
<dbReference type="PIR" id="C72571">
    <property type="entry name" value="C72571"/>
</dbReference>
<dbReference type="RefSeq" id="WP_010866637.1">
    <property type="nucleotide sequence ID" value="NC_000854.2"/>
</dbReference>
<dbReference type="SMR" id="Q9YAU2"/>
<dbReference type="STRING" id="272557.APE_1852.1"/>
<dbReference type="EnsemblBacteria" id="BAA80856">
    <property type="protein sequence ID" value="BAA80856"/>
    <property type="gene ID" value="APE_1852.1"/>
</dbReference>
<dbReference type="GeneID" id="1446290"/>
<dbReference type="KEGG" id="ape:APE_1852.1"/>
<dbReference type="PATRIC" id="fig|272557.25.peg.1243"/>
<dbReference type="eggNOG" id="arCOG04256">
    <property type="taxonomic scope" value="Archaea"/>
</dbReference>
<dbReference type="Proteomes" id="UP000002518">
    <property type="component" value="Chromosome"/>
</dbReference>
<dbReference type="GO" id="GO:0005737">
    <property type="term" value="C:cytoplasm"/>
    <property type="evidence" value="ECO:0007669"/>
    <property type="project" value="UniProtKB-SubCell"/>
</dbReference>
<dbReference type="GO" id="GO:0000428">
    <property type="term" value="C:DNA-directed RNA polymerase complex"/>
    <property type="evidence" value="ECO:0007669"/>
    <property type="project" value="UniProtKB-KW"/>
</dbReference>
<dbReference type="GO" id="GO:0003677">
    <property type="term" value="F:DNA binding"/>
    <property type="evidence" value="ECO:0007669"/>
    <property type="project" value="UniProtKB-UniRule"/>
</dbReference>
<dbReference type="GO" id="GO:0003899">
    <property type="term" value="F:DNA-directed RNA polymerase activity"/>
    <property type="evidence" value="ECO:0007669"/>
    <property type="project" value="UniProtKB-UniRule"/>
</dbReference>
<dbReference type="GO" id="GO:0006351">
    <property type="term" value="P:DNA-templated transcription"/>
    <property type="evidence" value="ECO:0007669"/>
    <property type="project" value="UniProtKB-UniRule"/>
</dbReference>
<dbReference type="CDD" id="cd06528">
    <property type="entry name" value="RNAP_A"/>
    <property type="match status" value="1"/>
</dbReference>
<dbReference type="Gene3D" id="1.10.150.390">
    <property type="match status" value="1"/>
</dbReference>
<dbReference type="HAMAP" id="MF_00411">
    <property type="entry name" value="RNApol_arch_Rpo1C"/>
    <property type="match status" value="1"/>
</dbReference>
<dbReference type="InterPro" id="IPR045867">
    <property type="entry name" value="DNA-dir_RpoC_beta_prime"/>
</dbReference>
<dbReference type="InterPro" id="IPR007081">
    <property type="entry name" value="RNA_pol_Rpb1_5"/>
</dbReference>
<dbReference type="InterPro" id="IPR012757">
    <property type="entry name" value="RPO1C"/>
</dbReference>
<dbReference type="NCBIfam" id="TIGR02389">
    <property type="entry name" value="RNA_pol_rpoA2"/>
    <property type="match status" value="1"/>
</dbReference>
<dbReference type="PANTHER" id="PTHR19376">
    <property type="entry name" value="DNA-DIRECTED RNA POLYMERASE"/>
    <property type="match status" value="1"/>
</dbReference>
<dbReference type="PANTHER" id="PTHR19376:SF32">
    <property type="entry name" value="DNA-DIRECTED RNA POLYMERASE III SUBUNIT RPC1"/>
    <property type="match status" value="1"/>
</dbReference>
<dbReference type="Pfam" id="PF04998">
    <property type="entry name" value="RNA_pol_Rpb1_5"/>
    <property type="match status" value="1"/>
</dbReference>
<dbReference type="SUPFAM" id="SSF64484">
    <property type="entry name" value="beta and beta-prime subunits of DNA dependent RNA-polymerase"/>
    <property type="match status" value="1"/>
</dbReference>
<sequence>MKEFKTLEESLEAARYILPESLYKELVETVEKEDGLSEEDKISVVKETIRTYLRSLAQPGEAVGTVAAQSIGEPGTQMTLRTFHYAGIMEFDVTLGLPRLIEIVDAKQTPSQPLMYIYLKDEYAKDLEKAKEAARKIEYTTLEKIIDNIEWDLGDRVVAIVINAEYMEDKGVTVDMVLEALDKSKLGKVVEDGVREVSEGGVKKVIVYFEISDKQLPDEELFNSNAYHKVLEKLKNTYIKGIKGIRKVTVRREEGEDSYEYMLIVEGSNLREVLMLPEVDHRRSISNDIQEIAQVLGIEAARTAIIEEIKRVLEDSGLDVDIRHLMLIADLMTWPGYVRQIGRLGVVGEKPSPLARAAFEVTVKQLYEAAVWGEEEEFAGVTENIIAGLPPRVGTGSVLLRMGAARK</sequence>
<protein>
    <recommendedName>
        <fullName evidence="1">DNA-directed RNA polymerase subunit Rpo1C</fullName>
        <ecNumber evidence="1">2.7.7.6</ecNumber>
    </recommendedName>
    <alternativeName>
        <fullName evidence="1">DNA-directed RNA polymerase subunit A''</fullName>
    </alternativeName>
</protein>
<gene>
    <name evidence="1" type="primary">rpo1C</name>
    <name evidence="1" type="synonym">rpoA2</name>
    <name type="ordered locus">APE_1852.1</name>
</gene>
<proteinExistence type="inferred from homology"/>
<reference key="1">
    <citation type="journal article" date="1999" name="DNA Res.">
        <title>Complete genome sequence of an aerobic hyper-thermophilic crenarchaeon, Aeropyrum pernix K1.</title>
        <authorList>
            <person name="Kawarabayasi Y."/>
            <person name="Hino Y."/>
            <person name="Horikawa H."/>
            <person name="Yamazaki S."/>
            <person name="Haikawa Y."/>
            <person name="Jin-no K."/>
            <person name="Takahashi M."/>
            <person name="Sekine M."/>
            <person name="Baba S."/>
            <person name="Ankai A."/>
            <person name="Kosugi H."/>
            <person name="Hosoyama A."/>
            <person name="Fukui S."/>
            <person name="Nagai Y."/>
            <person name="Nishijima K."/>
            <person name="Nakazawa H."/>
            <person name="Takamiya M."/>
            <person name="Masuda S."/>
            <person name="Funahashi T."/>
            <person name="Tanaka T."/>
            <person name="Kudoh Y."/>
            <person name="Yamazaki J."/>
            <person name="Kushida N."/>
            <person name="Oguchi A."/>
            <person name="Aoki K."/>
            <person name="Kubota K."/>
            <person name="Nakamura Y."/>
            <person name="Nomura N."/>
            <person name="Sako Y."/>
            <person name="Kikuchi H."/>
        </authorList>
    </citation>
    <scope>NUCLEOTIDE SEQUENCE [LARGE SCALE GENOMIC DNA]</scope>
    <source>
        <strain>ATCC 700893 / DSM 11879 / JCM 9820 / NBRC 100138 / K1</strain>
    </source>
</reference>
<name>RPO1C_AERPE</name>
<evidence type="ECO:0000255" key="1">
    <source>
        <dbReference type="HAMAP-Rule" id="MF_00411"/>
    </source>
</evidence>
<organism>
    <name type="scientific">Aeropyrum pernix (strain ATCC 700893 / DSM 11879 / JCM 9820 / NBRC 100138 / K1)</name>
    <dbReference type="NCBI Taxonomy" id="272557"/>
    <lineage>
        <taxon>Archaea</taxon>
        <taxon>Thermoproteota</taxon>
        <taxon>Thermoprotei</taxon>
        <taxon>Desulfurococcales</taxon>
        <taxon>Desulfurococcaceae</taxon>
        <taxon>Aeropyrum</taxon>
    </lineage>
</organism>
<feature type="chain" id="PRO_0000074011" description="DNA-directed RNA polymerase subunit Rpo1C">
    <location>
        <begin position="1"/>
        <end position="407"/>
    </location>
</feature>
<comment type="function">
    <text evidence="1">DNA-dependent RNA polymerase (RNAP) catalyzes the transcription of DNA into RNA using the four ribonucleoside triphosphates as substrates. Forms part of the jaw domain.</text>
</comment>
<comment type="catalytic activity">
    <reaction evidence="1">
        <text>RNA(n) + a ribonucleoside 5'-triphosphate = RNA(n+1) + diphosphate</text>
        <dbReference type="Rhea" id="RHEA:21248"/>
        <dbReference type="Rhea" id="RHEA-COMP:14527"/>
        <dbReference type="Rhea" id="RHEA-COMP:17342"/>
        <dbReference type="ChEBI" id="CHEBI:33019"/>
        <dbReference type="ChEBI" id="CHEBI:61557"/>
        <dbReference type="ChEBI" id="CHEBI:140395"/>
        <dbReference type="EC" id="2.7.7.6"/>
    </reaction>
</comment>
<comment type="subunit">
    <text evidence="1">Part of the RNA polymerase complex.</text>
</comment>
<comment type="subcellular location">
    <subcellularLocation>
        <location evidence="1">Cytoplasm</location>
    </subcellularLocation>
</comment>
<comment type="similarity">
    <text evidence="1">Belongs to the RNA polymerase beta' chain family.</text>
</comment>
<keyword id="KW-0963">Cytoplasm</keyword>
<keyword id="KW-0238">DNA-binding</keyword>
<keyword id="KW-0240">DNA-directed RNA polymerase</keyword>
<keyword id="KW-0548">Nucleotidyltransferase</keyword>
<keyword id="KW-1185">Reference proteome</keyword>
<keyword id="KW-0804">Transcription</keyword>
<keyword id="KW-0808">Transferase</keyword>
<accession>Q9YAU2</accession>